<gene>
    <name type="primary">BFR2</name>
    <name type="ordered locus">CNBH1440</name>
</gene>
<protein>
    <recommendedName>
        <fullName>Protein BFR2</fullName>
    </recommendedName>
</protein>
<proteinExistence type="inferred from homology"/>
<dbReference type="EMBL" id="AAEY01000042">
    <property type="protein sequence ID" value="EAL19042.1"/>
    <property type="molecule type" value="Genomic_DNA"/>
</dbReference>
<dbReference type="RefSeq" id="XP_773689.1">
    <property type="nucleotide sequence ID" value="XM_768596.1"/>
</dbReference>
<dbReference type="EnsemblFungi" id="AAW45370">
    <property type="protein sequence ID" value="AAW45370"/>
    <property type="gene ID" value="CNI01530"/>
</dbReference>
<dbReference type="GeneID" id="4937664"/>
<dbReference type="KEGG" id="cnb:CNBH1440"/>
<dbReference type="VEuPathDB" id="FungiDB:CNBH1440"/>
<dbReference type="HOGENOM" id="CLU_018299_2_1_1"/>
<dbReference type="OrthoDB" id="9111at5206"/>
<dbReference type="GO" id="GO:0005730">
    <property type="term" value="C:nucleolus"/>
    <property type="evidence" value="ECO:0007669"/>
    <property type="project" value="UniProtKB-SubCell"/>
</dbReference>
<dbReference type="GO" id="GO:0000462">
    <property type="term" value="P:maturation of SSU-rRNA from tricistronic rRNA transcript (SSU-rRNA, 5.8S rRNA, LSU-rRNA)"/>
    <property type="evidence" value="ECO:0007669"/>
    <property type="project" value="TreeGrafter"/>
</dbReference>
<dbReference type="InterPro" id="IPR025160">
    <property type="entry name" value="AATF"/>
</dbReference>
<dbReference type="InterPro" id="IPR039223">
    <property type="entry name" value="AATF/Bfr2"/>
</dbReference>
<dbReference type="InterPro" id="IPR012617">
    <property type="entry name" value="AATF_C"/>
</dbReference>
<dbReference type="PANTHER" id="PTHR15565">
    <property type="entry name" value="AATF PROTEIN APOPTOSIS ANTAGONIZING TRANSCRIPTION FACTOR"/>
    <property type="match status" value="1"/>
</dbReference>
<dbReference type="PANTHER" id="PTHR15565:SF0">
    <property type="entry name" value="PROTEIN AATF"/>
    <property type="match status" value="1"/>
</dbReference>
<dbReference type="Pfam" id="PF13339">
    <property type="entry name" value="AATF-Che1"/>
    <property type="match status" value="1"/>
</dbReference>
<dbReference type="Pfam" id="PF08164">
    <property type="entry name" value="TRAUB"/>
    <property type="match status" value="1"/>
</dbReference>
<name>BFR2_CRYNB</name>
<feature type="chain" id="PRO_0000409996" description="Protein BFR2">
    <location>
        <begin position="1"/>
        <end position="463"/>
    </location>
</feature>
<feature type="region of interest" description="Disordered" evidence="2">
    <location>
        <begin position="14"/>
        <end position="174"/>
    </location>
</feature>
<feature type="compositionally biased region" description="Basic and acidic residues" evidence="2">
    <location>
        <begin position="31"/>
        <end position="47"/>
    </location>
</feature>
<feature type="compositionally biased region" description="Acidic residues" evidence="2">
    <location>
        <begin position="83"/>
        <end position="92"/>
    </location>
</feature>
<feature type="compositionally biased region" description="Acidic residues" evidence="2">
    <location>
        <begin position="99"/>
        <end position="144"/>
    </location>
</feature>
<accession>P0CL91</accession>
<accession>Q55NE3</accession>
<accession>Q5KBS9</accession>
<evidence type="ECO:0000250" key="1"/>
<evidence type="ECO:0000256" key="2">
    <source>
        <dbReference type="SAM" id="MobiDB-lite"/>
    </source>
</evidence>
<evidence type="ECO:0000305" key="3"/>
<comment type="subcellular location">
    <subcellularLocation>
        <location evidence="1">Nucleus</location>
        <location evidence="1">Nucleolus</location>
    </subcellularLocation>
</comment>
<comment type="similarity">
    <text evidence="3">Belongs to the AATF family.</text>
</comment>
<sequence length="463" mass="50648">MSGLSLAQQLKQLHSNNVSVPDPESAYSNLDSHDIQRKGDEGREHYVDVGPSRLRMELGGTGGGTLTGPKYEGVKTGRMKIFDDDDDDDDDREGNGSEEGSDGEGDEDEDGDEDDEDEEDEDEDEEESDEDEQGEDEDEDEEEQPQPRANGSKQALDPVASLRNSRLKDVEKGQAIRKQKALFESLITLRITFQKALTASNTVPPTLPEDPENELAYKKASILKSLGELNERLFTLRESISLPGELGEDVSLGKRKRAEGDDAQGQAYWIKAAKESLGIADRSHPQLLPILNKWSSKIQAASLQLGSKQAGGSKFLQQMKNGAGGVVEAIESGINSKREAEKTLMESEETGYRALLREVIESRSGSGPAADLTHLRREKKKKREAERGGSKGRKLRYTVHEKAQNFVVPIPLSHGWHEEQVDELFSSLFGGVGMKGATAEKTVGLDVGTADEGLAELGGLRVF</sequence>
<keyword id="KW-0539">Nucleus</keyword>
<reference key="1">
    <citation type="journal article" date="2005" name="Science">
        <title>The genome of the basidiomycetous yeast and human pathogen Cryptococcus neoformans.</title>
        <authorList>
            <person name="Loftus B.J."/>
            <person name="Fung E."/>
            <person name="Roncaglia P."/>
            <person name="Rowley D."/>
            <person name="Amedeo P."/>
            <person name="Bruno D."/>
            <person name="Vamathevan J."/>
            <person name="Miranda M."/>
            <person name="Anderson I.J."/>
            <person name="Fraser J.A."/>
            <person name="Allen J.E."/>
            <person name="Bosdet I.E."/>
            <person name="Brent M.R."/>
            <person name="Chiu R."/>
            <person name="Doering T.L."/>
            <person name="Donlin M.J."/>
            <person name="D'Souza C.A."/>
            <person name="Fox D.S."/>
            <person name="Grinberg V."/>
            <person name="Fu J."/>
            <person name="Fukushima M."/>
            <person name="Haas B.J."/>
            <person name="Huang J.C."/>
            <person name="Janbon G."/>
            <person name="Jones S.J.M."/>
            <person name="Koo H.L."/>
            <person name="Krzywinski M.I."/>
            <person name="Kwon-Chung K.J."/>
            <person name="Lengeler K.B."/>
            <person name="Maiti R."/>
            <person name="Marra M.A."/>
            <person name="Marra R.E."/>
            <person name="Mathewson C.A."/>
            <person name="Mitchell T.G."/>
            <person name="Pertea M."/>
            <person name="Riggs F.R."/>
            <person name="Salzberg S.L."/>
            <person name="Schein J.E."/>
            <person name="Shvartsbeyn A."/>
            <person name="Shin H."/>
            <person name="Shumway M."/>
            <person name="Specht C.A."/>
            <person name="Suh B.B."/>
            <person name="Tenney A."/>
            <person name="Utterback T.R."/>
            <person name="Wickes B.L."/>
            <person name="Wortman J.R."/>
            <person name="Wye N.H."/>
            <person name="Kronstad J.W."/>
            <person name="Lodge J.K."/>
            <person name="Heitman J."/>
            <person name="Davis R.W."/>
            <person name="Fraser C.M."/>
            <person name="Hyman R.W."/>
        </authorList>
    </citation>
    <scope>NUCLEOTIDE SEQUENCE [LARGE SCALE GENOMIC DNA]</scope>
    <source>
        <strain>B-3501A</strain>
    </source>
</reference>
<organism>
    <name type="scientific">Cryptococcus neoformans var. neoformans serotype D (strain B-3501A)</name>
    <name type="common">Filobasidiella neoformans</name>
    <dbReference type="NCBI Taxonomy" id="283643"/>
    <lineage>
        <taxon>Eukaryota</taxon>
        <taxon>Fungi</taxon>
        <taxon>Dikarya</taxon>
        <taxon>Basidiomycota</taxon>
        <taxon>Agaricomycotina</taxon>
        <taxon>Tremellomycetes</taxon>
        <taxon>Tremellales</taxon>
        <taxon>Cryptococcaceae</taxon>
        <taxon>Cryptococcus</taxon>
        <taxon>Cryptococcus neoformans species complex</taxon>
    </lineage>
</organism>